<keyword id="KW-1185">Reference proteome</keyword>
<keyword id="KW-0686">Riboflavin biosynthesis</keyword>
<keyword id="KW-0808">Transferase</keyword>
<accession>Q2ILH7</accession>
<evidence type="ECO:0000255" key="1">
    <source>
        <dbReference type="HAMAP-Rule" id="MF_00178"/>
    </source>
</evidence>
<dbReference type="EC" id="2.5.1.78" evidence="1"/>
<dbReference type="EMBL" id="CP000251">
    <property type="protein sequence ID" value="ABC82509.1"/>
    <property type="molecule type" value="Genomic_DNA"/>
</dbReference>
<dbReference type="RefSeq" id="WP_011421791.1">
    <property type="nucleotide sequence ID" value="NC_007760.1"/>
</dbReference>
<dbReference type="SMR" id="Q2ILH7"/>
<dbReference type="STRING" id="290397.Adeh_2739"/>
<dbReference type="KEGG" id="ade:Adeh_2739"/>
<dbReference type="eggNOG" id="COG0054">
    <property type="taxonomic scope" value="Bacteria"/>
</dbReference>
<dbReference type="HOGENOM" id="CLU_089358_1_1_7"/>
<dbReference type="OrthoDB" id="9809709at2"/>
<dbReference type="UniPathway" id="UPA00275">
    <property type="reaction ID" value="UER00404"/>
</dbReference>
<dbReference type="Proteomes" id="UP000001935">
    <property type="component" value="Chromosome"/>
</dbReference>
<dbReference type="GO" id="GO:0005829">
    <property type="term" value="C:cytosol"/>
    <property type="evidence" value="ECO:0007669"/>
    <property type="project" value="TreeGrafter"/>
</dbReference>
<dbReference type="GO" id="GO:0009349">
    <property type="term" value="C:riboflavin synthase complex"/>
    <property type="evidence" value="ECO:0007669"/>
    <property type="project" value="InterPro"/>
</dbReference>
<dbReference type="GO" id="GO:0000906">
    <property type="term" value="F:6,7-dimethyl-8-ribityllumazine synthase activity"/>
    <property type="evidence" value="ECO:0007669"/>
    <property type="project" value="UniProtKB-UniRule"/>
</dbReference>
<dbReference type="GO" id="GO:0009231">
    <property type="term" value="P:riboflavin biosynthetic process"/>
    <property type="evidence" value="ECO:0007669"/>
    <property type="project" value="UniProtKB-UniRule"/>
</dbReference>
<dbReference type="CDD" id="cd09209">
    <property type="entry name" value="Lumazine_synthase-I"/>
    <property type="match status" value="1"/>
</dbReference>
<dbReference type="FunFam" id="3.40.50.960:FF:000001">
    <property type="entry name" value="6,7-dimethyl-8-ribityllumazine synthase"/>
    <property type="match status" value="1"/>
</dbReference>
<dbReference type="Gene3D" id="3.40.50.960">
    <property type="entry name" value="Lumazine/riboflavin synthase"/>
    <property type="match status" value="1"/>
</dbReference>
<dbReference type="HAMAP" id="MF_00178">
    <property type="entry name" value="Lumazine_synth"/>
    <property type="match status" value="1"/>
</dbReference>
<dbReference type="InterPro" id="IPR034964">
    <property type="entry name" value="LS"/>
</dbReference>
<dbReference type="InterPro" id="IPR002180">
    <property type="entry name" value="LS/RS"/>
</dbReference>
<dbReference type="InterPro" id="IPR036467">
    <property type="entry name" value="LS/RS_sf"/>
</dbReference>
<dbReference type="NCBIfam" id="TIGR00114">
    <property type="entry name" value="lumazine-synth"/>
    <property type="match status" value="1"/>
</dbReference>
<dbReference type="NCBIfam" id="NF000812">
    <property type="entry name" value="PRK00061.1-4"/>
    <property type="match status" value="1"/>
</dbReference>
<dbReference type="PANTHER" id="PTHR21058:SF0">
    <property type="entry name" value="6,7-DIMETHYL-8-RIBITYLLUMAZINE SYNTHASE"/>
    <property type="match status" value="1"/>
</dbReference>
<dbReference type="PANTHER" id="PTHR21058">
    <property type="entry name" value="6,7-DIMETHYL-8-RIBITYLLUMAZINE SYNTHASE DMRL SYNTHASE LUMAZINE SYNTHASE"/>
    <property type="match status" value="1"/>
</dbReference>
<dbReference type="Pfam" id="PF00885">
    <property type="entry name" value="DMRL_synthase"/>
    <property type="match status" value="1"/>
</dbReference>
<dbReference type="SUPFAM" id="SSF52121">
    <property type="entry name" value="Lumazine synthase"/>
    <property type="match status" value="1"/>
</dbReference>
<comment type="function">
    <text evidence="1">Catalyzes the formation of 6,7-dimethyl-8-ribityllumazine by condensation of 5-amino-6-(D-ribitylamino)uracil with 3,4-dihydroxy-2-butanone 4-phosphate. This is the penultimate step in the biosynthesis of riboflavin.</text>
</comment>
<comment type="catalytic activity">
    <reaction evidence="1">
        <text>(2S)-2-hydroxy-3-oxobutyl phosphate + 5-amino-6-(D-ribitylamino)uracil = 6,7-dimethyl-8-(1-D-ribityl)lumazine + phosphate + 2 H2O + H(+)</text>
        <dbReference type="Rhea" id="RHEA:26152"/>
        <dbReference type="ChEBI" id="CHEBI:15377"/>
        <dbReference type="ChEBI" id="CHEBI:15378"/>
        <dbReference type="ChEBI" id="CHEBI:15934"/>
        <dbReference type="ChEBI" id="CHEBI:43474"/>
        <dbReference type="ChEBI" id="CHEBI:58201"/>
        <dbReference type="ChEBI" id="CHEBI:58830"/>
        <dbReference type="EC" id="2.5.1.78"/>
    </reaction>
</comment>
<comment type="pathway">
    <text evidence="1">Cofactor biosynthesis; riboflavin biosynthesis; riboflavin from 2-hydroxy-3-oxobutyl phosphate and 5-amino-6-(D-ribitylamino)uracil: step 1/2.</text>
</comment>
<comment type="similarity">
    <text evidence="1">Belongs to the DMRL synthase family.</text>
</comment>
<sequence length="162" mass="16645">MNVYEGSLVGTGLKAALVVARFNSLVTEQLLVGAADALRRHGVADGDVDVFRCPGTFELPAVLRRVVATGRYDAVVALGAVIRGGTPHFEYVSAEVTKGVAHVAMEAGCAVAMGVLTCDSMEQALERAGVKAGNKGAEAAAAAVEQANVLRAIARAPARKAE</sequence>
<proteinExistence type="inferred from homology"/>
<feature type="chain" id="PRO_1000040360" description="6,7-dimethyl-8-ribityllumazine synthase">
    <location>
        <begin position="1"/>
        <end position="162"/>
    </location>
</feature>
<feature type="active site" description="Proton donor" evidence="1">
    <location>
        <position position="88"/>
    </location>
</feature>
<feature type="binding site" evidence="1">
    <location>
        <position position="22"/>
    </location>
    <ligand>
        <name>5-amino-6-(D-ribitylamino)uracil</name>
        <dbReference type="ChEBI" id="CHEBI:15934"/>
    </ligand>
</feature>
<feature type="binding site" evidence="1">
    <location>
        <begin position="56"/>
        <end position="58"/>
    </location>
    <ligand>
        <name>5-amino-6-(D-ribitylamino)uracil</name>
        <dbReference type="ChEBI" id="CHEBI:15934"/>
    </ligand>
</feature>
<feature type="binding site" evidence="1">
    <location>
        <begin position="80"/>
        <end position="82"/>
    </location>
    <ligand>
        <name>5-amino-6-(D-ribitylamino)uracil</name>
        <dbReference type="ChEBI" id="CHEBI:15934"/>
    </ligand>
</feature>
<feature type="binding site" evidence="1">
    <location>
        <begin position="85"/>
        <end position="86"/>
    </location>
    <ligand>
        <name>(2S)-2-hydroxy-3-oxobutyl phosphate</name>
        <dbReference type="ChEBI" id="CHEBI:58830"/>
    </ligand>
</feature>
<feature type="binding site" evidence="1">
    <location>
        <position position="113"/>
    </location>
    <ligand>
        <name>5-amino-6-(D-ribitylamino)uracil</name>
        <dbReference type="ChEBI" id="CHEBI:15934"/>
    </ligand>
</feature>
<feature type="binding site" evidence="1">
    <location>
        <position position="127"/>
    </location>
    <ligand>
        <name>(2S)-2-hydroxy-3-oxobutyl phosphate</name>
        <dbReference type="ChEBI" id="CHEBI:58830"/>
    </ligand>
</feature>
<organism>
    <name type="scientific">Anaeromyxobacter dehalogenans (strain 2CP-C)</name>
    <dbReference type="NCBI Taxonomy" id="290397"/>
    <lineage>
        <taxon>Bacteria</taxon>
        <taxon>Pseudomonadati</taxon>
        <taxon>Myxococcota</taxon>
        <taxon>Myxococcia</taxon>
        <taxon>Myxococcales</taxon>
        <taxon>Cystobacterineae</taxon>
        <taxon>Anaeromyxobacteraceae</taxon>
        <taxon>Anaeromyxobacter</taxon>
    </lineage>
</organism>
<name>RISB_ANADE</name>
<gene>
    <name evidence="1" type="primary">ribH</name>
    <name type="ordered locus">Adeh_2739</name>
</gene>
<protein>
    <recommendedName>
        <fullName evidence="1">6,7-dimethyl-8-ribityllumazine synthase</fullName>
        <shortName evidence="1">DMRL synthase</shortName>
        <shortName evidence="1">LS</shortName>
        <shortName evidence="1">Lumazine synthase</shortName>
        <ecNumber evidence="1">2.5.1.78</ecNumber>
    </recommendedName>
</protein>
<reference key="1">
    <citation type="submission" date="2006-01" db="EMBL/GenBank/DDBJ databases">
        <title>Complete sequence of Anaeromyxobacter dehalogenans 2CP-C.</title>
        <authorList>
            <person name="Copeland A."/>
            <person name="Lucas S."/>
            <person name="Lapidus A."/>
            <person name="Barry K."/>
            <person name="Detter J.C."/>
            <person name="Glavina T."/>
            <person name="Hammon N."/>
            <person name="Israni S."/>
            <person name="Pitluck S."/>
            <person name="Brettin T."/>
            <person name="Bruce D."/>
            <person name="Han C."/>
            <person name="Tapia R."/>
            <person name="Gilna P."/>
            <person name="Kiss H."/>
            <person name="Schmutz J."/>
            <person name="Larimer F."/>
            <person name="Land M."/>
            <person name="Kyrpides N."/>
            <person name="Anderson I."/>
            <person name="Sanford R.A."/>
            <person name="Ritalahti K.M."/>
            <person name="Thomas H.S."/>
            <person name="Kirby J.R."/>
            <person name="Zhulin I.B."/>
            <person name="Loeffler F.E."/>
            <person name="Richardson P."/>
        </authorList>
    </citation>
    <scope>NUCLEOTIDE SEQUENCE [LARGE SCALE GENOMIC DNA]</scope>
    <source>
        <strain>2CP-C</strain>
    </source>
</reference>